<accession>Q8Z3H8</accession>
<organism>
    <name type="scientific">Salmonella typhi</name>
    <dbReference type="NCBI Taxonomy" id="90370"/>
    <lineage>
        <taxon>Bacteria</taxon>
        <taxon>Pseudomonadati</taxon>
        <taxon>Pseudomonadota</taxon>
        <taxon>Gammaproteobacteria</taxon>
        <taxon>Enterobacterales</taxon>
        <taxon>Enterobacteriaceae</taxon>
        <taxon>Salmonella</taxon>
    </lineage>
</organism>
<keyword id="KW-0963">Cytoplasm</keyword>
<keyword id="KW-0690">Ribosome biogenesis</keyword>
<evidence type="ECO:0000255" key="1">
    <source>
        <dbReference type="HAMAP-Rule" id="MF_00003"/>
    </source>
</evidence>
<proteinExistence type="inferred from homology"/>
<sequence>MAKEFGRPQRVAQEMQKEIALILQREIKDPRVGMMTTVSGVEMSRDLAYAKVFVTFLNDQDEAAVKNGIKALQEASGFIRSLLGKAMRLRIVPELTFFYDNSLVEGMRMSNLVTNVVKHDEERRVNPDDSKED</sequence>
<feature type="chain" id="PRO_0000102725" description="Ribosome-binding factor A">
    <location>
        <begin position="1"/>
        <end position="133"/>
    </location>
</feature>
<protein>
    <recommendedName>
        <fullName evidence="1">Ribosome-binding factor A</fullName>
    </recommendedName>
</protein>
<comment type="function">
    <text evidence="1">One of several proteins that assist in the late maturation steps of the functional core of the 30S ribosomal subunit. Associates with free 30S ribosomal subunits (but not with 30S subunits that are part of 70S ribosomes or polysomes). Required for efficient processing of 16S rRNA. May interact with the 5'-terminal helix region of 16S rRNA.</text>
</comment>
<comment type="subunit">
    <text evidence="1">Monomer. Binds 30S ribosomal subunits, but not 50S ribosomal subunits or 70S ribosomes.</text>
</comment>
<comment type="subcellular location">
    <subcellularLocation>
        <location evidence="1">Cytoplasm</location>
    </subcellularLocation>
</comment>
<comment type="similarity">
    <text evidence="1">Belongs to the RbfA family.</text>
</comment>
<reference key="1">
    <citation type="journal article" date="2001" name="Nature">
        <title>Complete genome sequence of a multiple drug resistant Salmonella enterica serovar Typhi CT18.</title>
        <authorList>
            <person name="Parkhill J."/>
            <person name="Dougan G."/>
            <person name="James K.D."/>
            <person name="Thomson N.R."/>
            <person name="Pickard D."/>
            <person name="Wain J."/>
            <person name="Churcher C.M."/>
            <person name="Mungall K.L."/>
            <person name="Bentley S.D."/>
            <person name="Holden M.T.G."/>
            <person name="Sebaihia M."/>
            <person name="Baker S."/>
            <person name="Basham D."/>
            <person name="Brooks K."/>
            <person name="Chillingworth T."/>
            <person name="Connerton P."/>
            <person name="Cronin A."/>
            <person name="Davis P."/>
            <person name="Davies R.M."/>
            <person name="Dowd L."/>
            <person name="White N."/>
            <person name="Farrar J."/>
            <person name="Feltwell T."/>
            <person name="Hamlin N."/>
            <person name="Haque A."/>
            <person name="Hien T.T."/>
            <person name="Holroyd S."/>
            <person name="Jagels K."/>
            <person name="Krogh A."/>
            <person name="Larsen T.S."/>
            <person name="Leather S."/>
            <person name="Moule S."/>
            <person name="O'Gaora P."/>
            <person name="Parry C."/>
            <person name="Quail M.A."/>
            <person name="Rutherford K.M."/>
            <person name="Simmonds M."/>
            <person name="Skelton J."/>
            <person name="Stevens K."/>
            <person name="Whitehead S."/>
            <person name="Barrell B.G."/>
        </authorList>
    </citation>
    <scope>NUCLEOTIDE SEQUENCE [LARGE SCALE GENOMIC DNA]</scope>
    <source>
        <strain>CT18</strain>
    </source>
</reference>
<reference key="2">
    <citation type="journal article" date="2003" name="J. Bacteriol.">
        <title>Comparative genomics of Salmonella enterica serovar Typhi strains Ty2 and CT18.</title>
        <authorList>
            <person name="Deng W."/>
            <person name="Liou S.-R."/>
            <person name="Plunkett G. III"/>
            <person name="Mayhew G.F."/>
            <person name="Rose D.J."/>
            <person name="Burland V."/>
            <person name="Kodoyianni V."/>
            <person name="Schwartz D.C."/>
            <person name="Blattner F.R."/>
        </authorList>
    </citation>
    <scope>NUCLEOTIDE SEQUENCE [LARGE SCALE GENOMIC DNA]</scope>
    <source>
        <strain>ATCC 700931 / Ty2</strain>
    </source>
</reference>
<name>RBFA_SALTI</name>
<dbReference type="EMBL" id="AL513382">
    <property type="protein sequence ID" value="CAD07805.1"/>
    <property type="molecule type" value="Genomic_DNA"/>
</dbReference>
<dbReference type="EMBL" id="AE014613">
    <property type="protein sequence ID" value="AAO70741.1"/>
    <property type="molecule type" value="Genomic_DNA"/>
</dbReference>
<dbReference type="RefSeq" id="NP_457667.1">
    <property type="nucleotide sequence ID" value="NC_003198.1"/>
</dbReference>
<dbReference type="RefSeq" id="WP_001040208.1">
    <property type="nucleotide sequence ID" value="NZ_WSUR01000003.1"/>
</dbReference>
<dbReference type="SMR" id="Q8Z3H8"/>
<dbReference type="STRING" id="220341.gene:17587316"/>
<dbReference type="KEGG" id="stt:t3203"/>
<dbReference type="KEGG" id="sty:STY3466"/>
<dbReference type="PATRIC" id="fig|220341.7.peg.3528"/>
<dbReference type="eggNOG" id="COG0858">
    <property type="taxonomic scope" value="Bacteria"/>
</dbReference>
<dbReference type="HOGENOM" id="CLU_089475_5_0_6"/>
<dbReference type="OMA" id="QHAKIFV"/>
<dbReference type="OrthoDB" id="307788at2"/>
<dbReference type="Proteomes" id="UP000000541">
    <property type="component" value="Chromosome"/>
</dbReference>
<dbReference type="Proteomes" id="UP000002670">
    <property type="component" value="Chromosome"/>
</dbReference>
<dbReference type="GO" id="GO:0005829">
    <property type="term" value="C:cytosol"/>
    <property type="evidence" value="ECO:0007669"/>
    <property type="project" value="TreeGrafter"/>
</dbReference>
<dbReference type="GO" id="GO:0043024">
    <property type="term" value="F:ribosomal small subunit binding"/>
    <property type="evidence" value="ECO:0007669"/>
    <property type="project" value="TreeGrafter"/>
</dbReference>
<dbReference type="GO" id="GO:0030490">
    <property type="term" value="P:maturation of SSU-rRNA"/>
    <property type="evidence" value="ECO:0007669"/>
    <property type="project" value="UniProtKB-UniRule"/>
</dbReference>
<dbReference type="FunFam" id="3.30.300.20:FF:000007">
    <property type="entry name" value="Ribosome-binding factor A"/>
    <property type="match status" value="1"/>
</dbReference>
<dbReference type="Gene3D" id="3.30.300.20">
    <property type="match status" value="1"/>
</dbReference>
<dbReference type="HAMAP" id="MF_00003">
    <property type="entry name" value="RbfA"/>
    <property type="match status" value="1"/>
</dbReference>
<dbReference type="InterPro" id="IPR015946">
    <property type="entry name" value="KH_dom-like_a/b"/>
</dbReference>
<dbReference type="InterPro" id="IPR000238">
    <property type="entry name" value="RbfA"/>
</dbReference>
<dbReference type="InterPro" id="IPR023799">
    <property type="entry name" value="RbfA_dom_sf"/>
</dbReference>
<dbReference type="InterPro" id="IPR020053">
    <property type="entry name" value="Ribosome-bd_factorA_CS"/>
</dbReference>
<dbReference type="NCBIfam" id="TIGR00082">
    <property type="entry name" value="rbfA"/>
    <property type="match status" value="1"/>
</dbReference>
<dbReference type="PANTHER" id="PTHR33515">
    <property type="entry name" value="RIBOSOME-BINDING FACTOR A, CHLOROPLASTIC-RELATED"/>
    <property type="match status" value="1"/>
</dbReference>
<dbReference type="PANTHER" id="PTHR33515:SF1">
    <property type="entry name" value="RIBOSOME-BINDING FACTOR A, CHLOROPLASTIC-RELATED"/>
    <property type="match status" value="1"/>
</dbReference>
<dbReference type="Pfam" id="PF02033">
    <property type="entry name" value="RBFA"/>
    <property type="match status" value="1"/>
</dbReference>
<dbReference type="SUPFAM" id="SSF89919">
    <property type="entry name" value="Ribosome-binding factor A, RbfA"/>
    <property type="match status" value="1"/>
</dbReference>
<dbReference type="PROSITE" id="PS01319">
    <property type="entry name" value="RBFA"/>
    <property type="match status" value="1"/>
</dbReference>
<gene>
    <name evidence="1" type="primary">rbfA</name>
    <name type="ordered locus">STY3466</name>
    <name type="ordered locus">t3203</name>
</gene>